<gene>
    <name type="primary">fdoH</name>
    <name type="ordered locus">SF3969</name>
    <name type="ordered locus">S3779</name>
</gene>
<name>FDOH_SHIFL</name>
<organism>
    <name type="scientific">Shigella flexneri</name>
    <dbReference type="NCBI Taxonomy" id="623"/>
    <lineage>
        <taxon>Bacteria</taxon>
        <taxon>Pseudomonadati</taxon>
        <taxon>Pseudomonadota</taxon>
        <taxon>Gammaproteobacteria</taxon>
        <taxon>Enterobacterales</taxon>
        <taxon>Enterobacteriaceae</taxon>
        <taxon>Shigella</taxon>
    </lineage>
</organism>
<reference key="1">
    <citation type="journal article" date="2002" name="Nucleic Acids Res.">
        <title>Genome sequence of Shigella flexneri 2a: insights into pathogenicity through comparison with genomes of Escherichia coli K12 and O157.</title>
        <authorList>
            <person name="Jin Q."/>
            <person name="Yuan Z."/>
            <person name="Xu J."/>
            <person name="Wang Y."/>
            <person name="Shen Y."/>
            <person name="Lu W."/>
            <person name="Wang J."/>
            <person name="Liu H."/>
            <person name="Yang J."/>
            <person name="Yang F."/>
            <person name="Zhang X."/>
            <person name="Zhang J."/>
            <person name="Yang G."/>
            <person name="Wu H."/>
            <person name="Qu D."/>
            <person name="Dong J."/>
            <person name="Sun L."/>
            <person name="Xue Y."/>
            <person name="Zhao A."/>
            <person name="Gao Y."/>
            <person name="Zhu J."/>
            <person name="Kan B."/>
            <person name="Ding K."/>
            <person name="Chen S."/>
            <person name="Cheng H."/>
            <person name="Yao Z."/>
            <person name="He B."/>
            <person name="Chen R."/>
            <person name="Ma D."/>
            <person name="Qiang B."/>
            <person name="Wen Y."/>
            <person name="Hou Y."/>
            <person name="Yu J."/>
        </authorList>
    </citation>
    <scope>NUCLEOTIDE SEQUENCE [LARGE SCALE GENOMIC DNA]</scope>
    <source>
        <strain>301 / Serotype 2a</strain>
    </source>
</reference>
<reference key="2">
    <citation type="journal article" date="2003" name="Infect. Immun.">
        <title>Complete genome sequence and comparative genomics of Shigella flexneri serotype 2a strain 2457T.</title>
        <authorList>
            <person name="Wei J."/>
            <person name="Goldberg M.B."/>
            <person name="Burland V."/>
            <person name="Venkatesan M.M."/>
            <person name="Deng W."/>
            <person name="Fournier G."/>
            <person name="Mayhew G.F."/>
            <person name="Plunkett G. III"/>
            <person name="Rose D.J."/>
            <person name="Darling A."/>
            <person name="Mau B."/>
            <person name="Perna N.T."/>
            <person name="Payne S.M."/>
            <person name="Runyen-Janecky L.J."/>
            <person name="Zhou S."/>
            <person name="Schwartz D.C."/>
            <person name="Blattner F.R."/>
        </authorList>
    </citation>
    <scope>NUCLEOTIDE SEQUENCE [LARGE SCALE GENOMIC DNA]</scope>
    <source>
        <strain>ATCC 700930 / 2457T / Serotype 2a</strain>
    </source>
</reference>
<comment type="function">
    <text evidence="1">Allows to use formate as major electron donor during aerobic respiration. The beta chain is an electron transfer unit containing 4 cysteine clusters involved in the formation of iron-sulfur centers. Electrons are transferred from the gamma chain to the molybdenum cofactor of the alpha subunit (By similarity).</text>
</comment>
<comment type="cofactor">
    <cofactor evidence="2">
        <name>[4Fe-4S] cluster</name>
        <dbReference type="ChEBI" id="CHEBI:49883"/>
    </cofactor>
    <text evidence="2">Binds 4 [4Fe-4S] clusters per subunit.</text>
</comment>
<comment type="subunit">
    <text evidence="1">Formate dehydrogenase is a membrane-bound complex, formed by subunits alpha, beta and gamma.</text>
</comment>
<comment type="subcellular location">
    <subcellularLocation>
        <location evidence="1">Cell membrane</location>
        <topology evidence="1">Single-pass membrane protein</topology>
    </subcellularLocation>
</comment>
<accession>P0AAJ7</accession>
<accession>P32175</accession>
<keyword id="KW-0004">4Fe-4S</keyword>
<keyword id="KW-1003">Cell membrane</keyword>
<keyword id="KW-0249">Electron transport</keyword>
<keyword id="KW-0408">Iron</keyword>
<keyword id="KW-0411">Iron-sulfur</keyword>
<keyword id="KW-0472">Membrane</keyword>
<keyword id="KW-0479">Metal-binding</keyword>
<keyword id="KW-1185">Reference proteome</keyword>
<keyword id="KW-0677">Repeat</keyword>
<keyword id="KW-0812">Transmembrane</keyword>
<keyword id="KW-1133">Transmembrane helix</keyword>
<keyword id="KW-0813">Transport</keyword>
<sequence length="300" mass="33100">MAYQSQDIIRRSATNGLTPAPQARDFQEEVAKLIDVTTCIGCKACQVACSEWNDIRDTVGNNIGVYDNPNDLSAKSWTVMRFSEVEQNDKLEWLIRKDGCMHCSDPGCLKACPAEGAIIQYANGIVDFQSEQCIGCGYCIAGCPFDIPRLNPEDNRVYKCTLCVDRVVVGQEPACVKTCPTGAIHFGTKESMKTLASERVAELKTRGYDNAGLYDPAGVGGTHVMYVLHHADKPNLYHGLPENPEISETVKFWKGIWKPLAAVGFAATFAASIFHYVGVGPNRADEEENNLHEEKDEERK</sequence>
<proteinExistence type="inferred from homology"/>
<protein>
    <recommendedName>
        <fullName>Formate dehydrogenase-O iron-sulfur subunit</fullName>
    </recommendedName>
    <alternativeName>
        <fullName>Aerobic formate dehydrogenase iron-sulfur subunit</fullName>
    </alternativeName>
    <alternativeName>
        <fullName>FDH-Z subunit beta</fullName>
    </alternativeName>
    <alternativeName>
        <fullName>Formate dehydrogenase-O subunit beta</fullName>
    </alternativeName>
</protein>
<feature type="chain" id="PRO_0000159251" description="Formate dehydrogenase-O iron-sulfur subunit">
    <location>
        <begin position="1"/>
        <end position="300"/>
    </location>
</feature>
<feature type="topological domain" description="Cytoplasmic" evidence="4">
    <location>
        <begin position="1"/>
        <end position="260"/>
    </location>
</feature>
<feature type="transmembrane region" description="Helical" evidence="4">
    <location>
        <begin position="261"/>
        <end position="279"/>
    </location>
</feature>
<feature type="topological domain" description="Periplasmic" evidence="4">
    <location>
        <begin position="280"/>
        <end position="300"/>
    </location>
</feature>
<feature type="domain" description="4Fe-4S ferredoxin-type 1" evidence="3">
    <location>
        <begin position="30"/>
        <end position="60"/>
    </location>
</feature>
<feature type="domain" description="4Fe-4S ferredoxin-type 2" evidence="3">
    <location>
        <begin position="91"/>
        <end position="123"/>
    </location>
</feature>
<feature type="domain" description="4Fe-4S ferredoxin-type 3" evidence="3">
    <location>
        <begin position="124"/>
        <end position="153"/>
    </location>
</feature>
<feature type="domain" description="4Fe-4S ferredoxin-type 4" evidence="3">
    <location>
        <begin position="158"/>
        <end position="189"/>
    </location>
</feature>
<feature type="binding site" evidence="2">
    <location>
        <position position="39"/>
    </location>
    <ligand>
        <name>[4Fe-4S] cluster</name>
        <dbReference type="ChEBI" id="CHEBI:49883"/>
        <label>1</label>
    </ligand>
</feature>
<feature type="binding site" evidence="2">
    <location>
        <position position="42"/>
    </location>
    <ligand>
        <name>[4Fe-4S] cluster</name>
        <dbReference type="ChEBI" id="CHEBI:49883"/>
        <label>1</label>
    </ligand>
</feature>
<feature type="binding site" evidence="2">
    <location>
        <position position="45"/>
    </location>
    <ligand>
        <name>[4Fe-4S] cluster</name>
        <dbReference type="ChEBI" id="CHEBI:49883"/>
        <label>1</label>
    </ligand>
</feature>
<feature type="binding site" evidence="2">
    <location>
        <position position="49"/>
    </location>
    <ligand>
        <name>[4Fe-4S] cluster</name>
        <dbReference type="ChEBI" id="CHEBI:49883"/>
        <label>2</label>
    </ligand>
</feature>
<feature type="binding site" evidence="2">
    <location>
        <position position="100"/>
    </location>
    <ligand>
        <name>[4Fe-4S] cluster</name>
        <dbReference type="ChEBI" id="CHEBI:49883"/>
        <label>3</label>
    </ligand>
</feature>
<feature type="binding site" evidence="2">
    <location>
        <position position="103"/>
    </location>
    <ligand>
        <name>[4Fe-4S] cluster</name>
        <dbReference type="ChEBI" id="CHEBI:49883"/>
        <label>3</label>
    </ligand>
</feature>
<feature type="binding site" evidence="2">
    <location>
        <position position="108"/>
    </location>
    <ligand>
        <name>[4Fe-4S] cluster</name>
        <dbReference type="ChEBI" id="CHEBI:49883"/>
        <label>3</label>
    </ligand>
</feature>
<feature type="binding site" evidence="2">
    <location>
        <position position="112"/>
    </location>
    <ligand>
        <name>[4Fe-4S] cluster</name>
        <dbReference type="ChEBI" id="CHEBI:49883"/>
        <label>4</label>
    </ligand>
</feature>
<feature type="binding site" evidence="2">
    <location>
        <position position="133"/>
    </location>
    <ligand>
        <name>[4Fe-4S] cluster</name>
        <dbReference type="ChEBI" id="CHEBI:49883"/>
        <label>4</label>
    </ligand>
</feature>
<feature type="binding site" evidence="2">
    <location>
        <position position="136"/>
    </location>
    <ligand>
        <name>[4Fe-4S] cluster</name>
        <dbReference type="ChEBI" id="CHEBI:49883"/>
        <label>4</label>
    </ligand>
</feature>
<feature type="binding site" evidence="2">
    <location>
        <position position="139"/>
    </location>
    <ligand>
        <name>[4Fe-4S] cluster</name>
        <dbReference type="ChEBI" id="CHEBI:49883"/>
        <label>4</label>
    </ligand>
</feature>
<feature type="binding site" evidence="2">
    <location>
        <position position="143"/>
    </location>
    <ligand>
        <name>[4Fe-4S] cluster</name>
        <dbReference type="ChEBI" id="CHEBI:49883"/>
        <label>3</label>
    </ligand>
</feature>
<feature type="binding site" evidence="2">
    <location>
        <position position="160"/>
    </location>
    <ligand>
        <name>[4Fe-4S] cluster</name>
        <dbReference type="ChEBI" id="CHEBI:49883"/>
        <label>2</label>
    </ligand>
</feature>
<feature type="binding site" evidence="2">
    <location>
        <position position="163"/>
    </location>
    <ligand>
        <name>[4Fe-4S] cluster</name>
        <dbReference type="ChEBI" id="CHEBI:49883"/>
        <label>2</label>
    </ligand>
</feature>
<feature type="binding site" evidence="2">
    <location>
        <position position="175"/>
    </location>
    <ligand>
        <name>[4Fe-4S] cluster</name>
        <dbReference type="ChEBI" id="CHEBI:49883"/>
        <label>2</label>
    </ligand>
</feature>
<feature type="binding site" evidence="2">
    <location>
        <position position="179"/>
    </location>
    <ligand>
        <name>[4Fe-4S] cluster</name>
        <dbReference type="ChEBI" id="CHEBI:49883"/>
        <label>1</label>
    </ligand>
</feature>
<evidence type="ECO:0000250" key="1"/>
<evidence type="ECO:0000250" key="2">
    <source>
        <dbReference type="UniProtKB" id="P0AAJ3"/>
    </source>
</evidence>
<evidence type="ECO:0000255" key="3">
    <source>
        <dbReference type="PROSITE-ProRule" id="PRU00711"/>
    </source>
</evidence>
<evidence type="ECO:0000305" key="4"/>
<dbReference type="EMBL" id="AE005674">
    <property type="protein sequence ID" value="AAN45404.1"/>
    <property type="molecule type" value="Genomic_DNA"/>
</dbReference>
<dbReference type="EMBL" id="AE014073">
    <property type="protein sequence ID" value="AAP18796.1"/>
    <property type="molecule type" value="Genomic_DNA"/>
</dbReference>
<dbReference type="RefSeq" id="NP_709697.1">
    <property type="nucleotide sequence ID" value="NC_004337.2"/>
</dbReference>
<dbReference type="RefSeq" id="WP_000331377.1">
    <property type="nucleotide sequence ID" value="NZ_WPGW01000130.1"/>
</dbReference>
<dbReference type="SMR" id="P0AAJ7"/>
<dbReference type="STRING" id="198214.SF3969"/>
<dbReference type="PaxDb" id="198214-SF3969"/>
<dbReference type="GeneID" id="1026918"/>
<dbReference type="GeneID" id="93778045"/>
<dbReference type="KEGG" id="sfl:SF3969"/>
<dbReference type="KEGG" id="sfx:S3779"/>
<dbReference type="PATRIC" id="fig|198214.7.peg.4677"/>
<dbReference type="HOGENOM" id="CLU_043374_0_3_6"/>
<dbReference type="Proteomes" id="UP000001006">
    <property type="component" value="Chromosome"/>
</dbReference>
<dbReference type="Proteomes" id="UP000002673">
    <property type="component" value="Chromosome"/>
</dbReference>
<dbReference type="GO" id="GO:0005886">
    <property type="term" value="C:plasma membrane"/>
    <property type="evidence" value="ECO:0007669"/>
    <property type="project" value="UniProtKB-SubCell"/>
</dbReference>
<dbReference type="GO" id="GO:0051539">
    <property type="term" value="F:4 iron, 4 sulfur cluster binding"/>
    <property type="evidence" value="ECO:0007669"/>
    <property type="project" value="UniProtKB-KW"/>
</dbReference>
<dbReference type="GO" id="GO:0046872">
    <property type="term" value="F:metal ion binding"/>
    <property type="evidence" value="ECO:0007669"/>
    <property type="project" value="UniProtKB-KW"/>
</dbReference>
<dbReference type="GO" id="GO:0045333">
    <property type="term" value="P:cellular respiration"/>
    <property type="evidence" value="ECO:0007669"/>
    <property type="project" value="InterPro"/>
</dbReference>
<dbReference type="GO" id="GO:0015944">
    <property type="term" value="P:formate oxidation"/>
    <property type="evidence" value="ECO:0007669"/>
    <property type="project" value="InterPro"/>
</dbReference>
<dbReference type="CDD" id="cd10558">
    <property type="entry name" value="FDH-N"/>
    <property type="match status" value="1"/>
</dbReference>
<dbReference type="FunFam" id="1.20.5.480:FF:000001">
    <property type="entry name" value="Formate dehydrogenase iron-sulfur subunit"/>
    <property type="match status" value="1"/>
</dbReference>
<dbReference type="Gene3D" id="3.30.70.20">
    <property type="match status" value="2"/>
</dbReference>
<dbReference type="Gene3D" id="1.20.5.480">
    <property type="entry name" value="Single helix bin"/>
    <property type="match status" value="1"/>
</dbReference>
<dbReference type="InterPro" id="IPR017896">
    <property type="entry name" value="4Fe4S_Fe-S-bd"/>
</dbReference>
<dbReference type="InterPro" id="IPR017900">
    <property type="entry name" value="4Fe4S_Fe_S_CS"/>
</dbReference>
<dbReference type="InterPro" id="IPR051555">
    <property type="entry name" value="FDH_Electron_Transfer_Unit"/>
</dbReference>
<dbReference type="InterPro" id="IPR006470">
    <property type="entry name" value="Formate_DH_bsu_Proteobacteria"/>
</dbReference>
<dbReference type="InterPro" id="IPR038384">
    <property type="entry name" value="Formate_DH_C_sf"/>
</dbReference>
<dbReference type="InterPro" id="IPR014603">
    <property type="entry name" value="Formate_DH_Fe-S_su"/>
</dbReference>
<dbReference type="InterPro" id="IPR015246">
    <property type="entry name" value="Formate_DH_TM"/>
</dbReference>
<dbReference type="NCBIfam" id="TIGR01582">
    <property type="entry name" value="FDH-beta"/>
    <property type="match status" value="1"/>
</dbReference>
<dbReference type="PANTHER" id="PTHR43545">
    <property type="entry name" value="FORMATE DEHYDROGENASE, NITRATE-INDUCIBLE, IRON-SULFUR SUBUNIT"/>
    <property type="match status" value="1"/>
</dbReference>
<dbReference type="PANTHER" id="PTHR43545:SF7">
    <property type="entry name" value="FORMATE DEHYDROGENASE-O IRON-SULFUR SUBUNIT"/>
    <property type="match status" value="1"/>
</dbReference>
<dbReference type="Pfam" id="PF13247">
    <property type="entry name" value="Fer4_11"/>
    <property type="match status" value="1"/>
</dbReference>
<dbReference type="Pfam" id="PF09163">
    <property type="entry name" value="Form-deh_trans"/>
    <property type="match status" value="1"/>
</dbReference>
<dbReference type="PIRSF" id="PIRSF036298">
    <property type="entry name" value="FDH_4Fe4S"/>
    <property type="match status" value="1"/>
</dbReference>
<dbReference type="SUPFAM" id="SSF54862">
    <property type="entry name" value="4Fe-4S ferredoxins"/>
    <property type="match status" value="1"/>
</dbReference>
<dbReference type="PROSITE" id="PS00198">
    <property type="entry name" value="4FE4S_FER_1"/>
    <property type="match status" value="1"/>
</dbReference>
<dbReference type="PROSITE" id="PS51379">
    <property type="entry name" value="4FE4S_FER_2"/>
    <property type="match status" value="4"/>
</dbReference>